<reference key="1">
    <citation type="journal article" date="2004" name="Appl. Environ. Microbiol.">
        <title>Culture-independent analysis of fecal enterobacteria in environmental samples by single-cell mRNA profiling.</title>
        <authorList>
            <person name="Chen H."/>
            <person name="Ponniah G."/>
            <person name="Salonen N."/>
            <person name="Blum P."/>
        </authorList>
    </citation>
    <scope>NUCLEOTIDE SEQUENCE [GENOMIC DNA]</scope>
    <source>
        <strain>ATCC 13880 / DSM 30121 / JCM 1239 / NBRC 102204 / NCIMB 9155 / NCTC 10211</strain>
    </source>
</reference>
<proteinExistence type="inferred from homology"/>
<sequence length="167" mass="18798">MSTAKLVKTKSSDLLYTRNDLDEKVKLAAIKALNHQVVQFIDLSLITKQAHWNMRGANFIAVHEMLDGFRTAIIEHQDTFAERVVQLGGVALGTVQVVNDRTPLKSYPTNIHSVQEHLKALADRYGAVANDIRKAITEVEDEDTADMFTAASRDLDKFLWFIESNIE</sequence>
<protein>
    <recommendedName>
        <fullName evidence="1">DNA protection during starvation protein</fullName>
        <ecNumber evidence="1">1.16.-.-</ecNumber>
    </recommendedName>
</protein>
<gene>
    <name evidence="1" type="primary">dps</name>
</gene>
<accession>Q84AP0</accession>
<keyword id="KW-0963">Cytoplasm</keyword>
<keyword id="KW-0226">DNA condensation</keyword>
<keyword id="KW-0238">DNA-binding</keyword>
<keyword id="KW-0408">Iron</keyword>
<keyword id="KW-0409">Iron storage</keyword>
<keyword id="KW-0479">Metal-binding</keyword>
<keyword id="KW-0560">Oxidoreductase</keyword>
<comment type="function">
    <text evidence="1">During stationary phase, binds the chromosome non-specifically, forming a highly ordered and stable dps-DNA co-crystal within which chromosomal DNA is condensed and protected from diverse damages. It protects DNA from oxidative damage by sequestering intracellular Fe(2+) ion and storing it in the form of Fe(3+) oxyhydroxide mineral, which can be released after reduction. One hydrogen peroxide oxidizes two Fe(2+) ions, which prevents hydroxyl radical production by the Fenton reaction.</text>
</comment>
<comment type="catalytic activity">
    <reaction evidence="1">
        <text>2 Fe(2+) + H2O2 + 2 H(+) = 2 Fe(3+) + 2 H2O</text>
        <dbReference type="Rhea" id="RHEA:48712"/>
        <dbReference type="ChEBI" id="CHEBI:15377"/>
        <dbReference type="ChEBI" id="CHEBI:15378"/>
        <dbReference type="ChEBI" id="CHEBI:16240"/>
        <dbReference type="ChEBI" id="CHEBI:29033"/>
        <dbReference type="ChEBI" id="CHEBI:29034"/>
    </reaction>
</comment>
<comment type="subunit">
    <text evidence="1">Homododecamer. The 12 subunits form a hollow sphere into which the mineral iron core of up to 500 Fe(3+) can be deposited.</text>
</comment>
<comment type="subcellular location">
    <subcellularLocation>
        <location evidence="1">Cytoplasm</location>
    </subcellularLocation>
</comment>
<comment type="similarity">
    <text evidence="1">Belongs to the Dps family.</text>
</comment>
<evidence type="ECO:0000255" key="1">
    <source>
        <dbReference type="HAMAP-Rule" id="MF_01441"/>
    </source>
</evidence>
<feature type="chain" id="PRO_0000271593" description="DNA protection during starvation protein">
    <location>
        <begin position="1"/>
        <end position="167"/>
    </location>
</feature>
<feature type="binding site" evidence="1">
    <location>
        <position position="51"/>
    </location>
    <ligand>
        <name>Fe cation</name>
        <dbReference type="ChEBI" id="CHEBI:24875"/>
    </ligand>
</feature>
<feature type="binding site" evidence="1">
    <location>
        <position position="78"/>
    </location>
    <ligand>
        <name>Fe cation</name>
        <dbReference type="ChEBI" id="CHEBI:24875"/>
    </ligand>
</feature>
<feature type="binding site" evidence="1">
    <location>
        <position position="82"/>
    </location>
    <ligand>
        <name>Fe cation</name>
        <dbReference type="ChEBI" id="CHEBI:24875"/>
    </ligand>
</feature>
<dbReference type="EC" id="1.16.-.-" evidence="1"/>
<dbReference type="EMBL" id="AY191366">
    <property type="protein sequence ID" value="AAO47741.1"/>
    <property type="molecule type" value="Genomic_DNA"/>
</dbReference>
<dbReference type="RefSeq" id="WP_004939215.1">
    <property type="nucleotide sequence ID" value="NZ_WUWF01000002.1"/>
</dbReference>
<dbReference type="SMR" id="Q84AP0"/>
<dbReference type="STRING" id="273526.SMDB11_0757"/>
<dbReference type="GeneID" id="98187337"/>
<dbReference type="OrthoDB" id="9797687at2"/>
<dbReference type="GO" id="GO:0005737">
    <property type="term" value="C:cytoplasm"/>
    <property type="evidence" value="ECO:0007669"/>
    <property type="project" value="UniProtKB-SubCell"/>
</dbReference>
<dbReference type="GO" id="GO:0003677">
    <property type="term" value="F:DNA binding"/>
    <property type="evidence" value="ECO:0007669"/>
    <property type="project" value="UniProtKB-UniRule"/>
</dbReference>
<dbReference type="GO" id="GO:0008199">
    <property type="term" value="F:ferric iron binding"/>
    <property type="evidence" value="ECO:0007669"/>
    <property type="project" value="UniProtKB-UniRule"/>
</dbReference>
<dbReference type="GO" id="GO:0016722">
    <property type="term" value="F:oxidoreductase activity, acting on metal ions"/>
    <property type="evidence" value="ECO:0007669"/>
    <property type="project" value="InterPro"/>
</dbReference>
<dbReference type="GO" id="GO:0030261">
    <property type="term" value="P:chromosome condensation"/>
    <property type="evidence" value="ECO:0007669"/>
    <property type="project" value="UniProtKB-KW"/>
</dbReference>
<dbReference type="GO" id="GO:0006879">
    <property type="term" value="P:intracellular iron ion homeostasis"/>
    <property type="evidence" value="ECO:0007669"/>
    <property type="project" value="UniProtKB-KW"/>
</dbReference>
<dbReference type="CDD" id="cd01043">
    <property type="entry name" value="DPS"/>
    <property type="match status" value="1"/>
</dbReference>
<dbReference type="Gene3D" id="1.20.1260.10">
    <property type="match status" value="1"/>
</dbReference>
<dbReference type="HAMAP" id="MF_01441">
    <property type="entry name" value="Dps"/>
    <property type="match status" value="1"/>
</dbReference>
<dbReference type="InterPro" id="IPR002177">
    <property type="entry name" value="DPS_DNA-bd"/>
</dbReference>
<dbReference type="InterPro" id="IPR023188">
    <property type="entry name" value="DPS_DNA-bd_CS"/>
</dbReference>
<dbReference type="InterPro" id="IPR023067">
    <property type="entry name" value="Dps_gammaproteobac"/>
</dbReference>
<dbReference type="InterPro" id="IPR012347">
    <property type="entry name" value="Ferritin-like"/>
</dbReference>
<dbReference type="InterPro" id="IPR009078">
    <property type="entry name" value="Ferritin-like_SF"/>
</dbReference>
<dbReference type="InterPro" id="IPR008331">
    <property type="entry name" value="Ferritin_DPS_dom"/>
</dbReference>
<dbReference type="NCBIfam" id="NF006975">
    <property type="entry name" value="PRK09448.1"/>
    <property type="match status" value="1"/>
</dbReference>
<dbReference type="PANTHER" id="PTHR42932:SF3">
    <property type="entry name" value="DNA PROTECTION DURING STARVATION PROTEIN"/>
    <property type="match status" value="1"/>
</dbReference>
<dbReference type="PANTHER" id="PTHR42932">
    <property type="entry name" value="GENERAL STRESS PROTEIN 20U"/>
    <property type="match status" value="1"/>
</dbReference>
<dbReference type="Pfam" id="PF00210">
    <property type="entry name" value="Ferritin"/>
    <property type="match status" value="1"/>
</dbReference>
<dbReference type="PIRSF" id="PIRSF005900">
    <property type="entry name" value="Dps"/>
    <property type="match status" value="1"/>
</dbReference>
<dbReference type="PRINTS" id="PR01346">
    <property type="entry name" value="HELNAPAPROT"/>
</dbReference>
<dbReference type="SUPFAM" id="SSF47240">
    <property type="entry name" value="Ferritin-like"/>
    <property type="match status" value="1"/>
</dbReference>
<dbReference type="PROSITE" id="PS00818">
    <property type="entry name" value="DPS_1"/>
    <property type="match status" value="1"/>
</dbReference>
<name>DPS_SERMA</name>
<organism>
    <name type="scientific">Serratia marcescens</name>
    <dbReference type="NCBI Taxonomy" id="615"/>
    <lineage>
        <taxon>Bacteria</taxon>
        <taxon>Pseudomonadati</taxon>
        <taxon>Pseudomonadota</taxon>
        <taxon>Gammaproteobacteria</taxon>
        <taxon>Enterobacterales</taxon>
        <taxon>Yersiniaceae</taxon>
        <taxon>Serratia</taxon>
    </lineage>
</organism>